<organism>
    <name type="scientific">Yersinia enterocolitica</name>
    <dbReference type="NCBI Taxonomy" id="630"/>
    <lineage>
        <taxon>Bacteria</taxon>
        <taxon>Pseudomonadati</taxon>
        <taxon>Pseudomonadota</taxon>
        <taxon>Gammaproteobacteria</taxon>
        <taxon>Enterobacterales</taxon>
        <taxon>Yersiniaceae</taxon>
        <taxon>Yersinia</taxon>
    </lineage>
</organism>
<feature type="chain" id="PRO_0000201731" description="Modulating protein YmoA">
    <location>
        <begin position="1"/>
        <end position="67"/>
    </location>
</feature>
<feature type="mutagenesis site" description="Alters structural dynamics of free protein, loss of H-NS binding (tested with E.coli H-NS fragment 1-64)." evidence="4">
    <original>D</original>
    <variation>N</variation>
    <location>
        <position position="43"/>
    </location>
</feature>
<gene>
    <name type="primary">ymoA</name>
    <name type="synonym">hha</name>
</gene>
<protein>
    <recommendedName>
        <fullName>Modulating protein YmoA</fullName>
    </recommendedName>
    <alternativeName>
        <fullName>Histone-like protein</fullName>
    </alternativeName>
</protein>
<sequence>MTKTDYLMRLRKCTTIDTLERVIEKNKYELSDDELELFYSAADHRLAELTMNKLYDKIPPTVWQHVK</sequence>
<evidence type="ECO:0000250" key="1">
    <source>
        <dbReference type="UniProtKB" id="P0ACE3"/>
    </source>
</evidence>
<evidence type="ECO:0000269" key="2">
    <source>
    </source>
</evidence>
<evidence type="ECO:0000269" key="3">
    <source>
    </source>
</evidence>
<evidence type="ECO:0000269" key="4">
    <source>
    </source>
</evidence>
<evidence type="ECO:0000305" key="5">
    <source>
    </source>
</evidence>
<accession>P0A3X1</accession>
<accession>P27720</accession>
<dbReference type="EMBL" id="X58058">
    <property type="protein sequence ID" value="CAA41091.1"/>
    <property type="molecule type" value="Genomic_DNA"/>
</dbReference>
<dbReference type="PIR" id="S15291">
    <property type="entry name" value="S15291"/>
</dbReference>
<dbReference type="RefSeq" id="WP_002208622.1">
    <property type="nucleotide sequence ID" value="NZ_WJHZ01000062.1"/>
</dbReference>
<dbReference type="BMRB" id="P0A3X1"/>
<dbReference type="SMR" id="P0A3X1"/>
<dbReference type="STRING" id="1443113.LC20_01418"/>
<dbReference type="GeneID" id="97457253"/>
<dbReference type="eggNOG" id="ENOG5032SGA">
    <property type="taxonomic scope" value="Bacteria"/>
</dbReference>
<dbReference type="OMA" id="RRCQSID"/>
<dbReference type="OrthoDB" id="6445588at2"/>
<dbReference type="Gene3D" id="1.20.1280.40">
    <property type="entry name" value="HHA"/>
    <property type="match status" value="1"/>
</dbReference>
<dbReference type="InterPro" id="IPR007985">
    <property type="entry name" value="Hemolysn_expr_modulating_HHA"/>
</dbReference>
<dbReference type="InterPro" id="IPR036666">
    <property type="entry name" value="HHA_sf"/>
</dbReference>
<dbReference type="NCBIfam" id="NF008191">
    <property type="entry name" value="PRK10945.1"/>
    <property type="match status" value="1"/>
</dbReference>
<dbReference type="Pfam" id="PF05321">
    <property type="entry name" value="HHA"/>
    <property type="match status" value="1"/>
</dbReference>
<dbReference type="SUPFAM" id="SSF68989">
    <property type="entry name" value="Hemolysin expression modulating protein HHA"/>
    <property type="match status" value="1"/>
</dbReference>
<keyword id="KW-0804">Transcription</keyword>
<keyword id="KW-0805">Transcription regulation</keyword>
<proteinExistence type="evidence at protein level"/>
<comment type="function">
    <text evidence="1 3">Modulates the thermoregulation of VirF, and hence the yop regulon, as well as the expression of the enterotoxin gene yst (PubMed:1956283). Involved in chromosome structure and DNA topology probably by means of compaction of DNA in conjunction with H-NS; probably requires H-NS to bind DNA (By similarity).</text>
</comment>
<comment type="subunit">
    <text evidence="2 4">Interacts with H-NS, in the absence of DNA (PubMed:11790731, PubMed:26085102).</text>
</comment>
<comment type="similarity">
    <text evidence="5">Belongs to the Hha/YmoA/Cnu family.</text>
</comment>
<reference key="1">
    <citation type="journal article" date="1991" name="Mol. Microbiol.">
        <title>ymoA, a Yersinia enterocolitica chromosomal gene modulating the expression of virulence functions.</title>
        <authorList>
            <person name="Cornelis G.R."/>
            <person name="Sluiters C."/>
            <person name="Delor I."/>
            <person name="Geib D."/>
            <person name="Kaniga K."/>
            <person name="Lambert de Rouvroit C."/>
            <person name="Sory M.-P."/>
            <person name="Vanooteghem J.-C."/>
            <person name="Michiels T."/>
        </authorList>
    </citation>
    <scope>NUCLEOTIDE SEQUENCE [GENOMIC DNA]</scope>
    <scope>FUNCTION</scope>
    <source>
        <strain>W227 / Serotype O:9</strain>
    </source>
</reference>
<reference key="2">
    <citation type="journal article" date="1992" name="Mol. Microbiol.">
        <title>The Hha protein from Escherichia coli is highly homologous to the YmoA protein from Yersinia enterocolitica.</title>
        <authorList>
            <person name="de la Cruz F."/>
            <person name="Carmona M."/>
            <person name="Juarez A."/>
        </authorList>
    </citation>
    <scope>SIMILARITY TO HHA</scope>
</reference>
<reference key="3">
    <citation type="journal article" date="2002" name="J. Bacteriol.">
        <title>Evidence for direct protein-protein interaction between members of the enterobacterial Hha/YmoA and H-NS families of proteins.</title>
        <authorList>
            <person name="Nieto J.M."/>
            <person name="Madrid C."/>
            <person name="Miquelay E."/>
            <person name="Parra J.L."/>
            <person name="Rodriguez S."/>
            <person name="Juarez A."/>
        </authorList>
    </citation>
    <scope>INTERACTION WITH H-NS</scope>
    <source>
        <strain>DSM 9499 / NCTC 11174 / Y754</strain>
    </source>
</reference>
<reference key="4">
    <citation type="journal article" date="2015" name="J. Biol. Chem.">
        <title>A three-protein charge zipper stabilizes a complex modulating bacterial gene silencing.</title>
        <authorList>
            <person name="Cordeiro T.N."/>
            <person name="Garcia J."/>
            <person name="Bernado P."/>
            <person name="Millet O."/>
            <person name="Pons M."/>
        </authorList>
    </citation>
    <scope>SUBUNIT</scope>
    <scope>MUTAGENESIS OF ASP-43</scope>
</reference>
<name>YMOA_YEREN</name>